<gene>
    <name evidence="1" type="primary">secA</name>
    <name type="ordered locus">YPA_3537</name>
</gene>
<proteinExistence type="inferred from homology"/>
<name>SECA_YERPA</name>
<comment type="function">
    <text evidence="1">Part of the Sec protein translocase complex. Interacts with the SecYEG preprotein conducting channel. Has a central role in coupling the hydrolysis of ATP to the transfer of proteins into and across the cell membrane, serving both as a receptor for the preprotein-SecB complex and as an ATP-driven molecular motor driving the stepwise translocation of polypeptide chains across the membrane.</text>
</comment>
<comment type="catalytic activity">
    <reaction evidence="1">
        <text>ATP + H2O + cellular proteinSide 1 = ADP + phosphate + cellular proteinSide 2.</text>
        <dbReference type="EC" id="7.4.2.8"/>
    </reaction>
</comment>
<comment type="cofactor">
    <cofactor evidence="1">
        <name>Zn(2+)</name>
        <dbReference type="ChEBI" id="CHEBI:29105"/>
    </cofactor>
    <text evidence="1">May bind 1 zinc ion per subunit.</text>
</comment>
<comment type="subunit">
    <text evidence="1">Monomer and homodimer. Part of the essential Sec protein translocation apparatus which comprises SecA, SecYEG and auxiliary proteins SecDF-YajC and YidC.</text>
</comment>
<comment type="subcellular location">
    <subcellularLocation>
        <location evidence="1">Cell inner membrane</location>
        <topology evidence="1">Peripheral membrane protein</topology>
        <orientation evidence="1">Cytoplasmic side</orientation>
    </subcellularLocation>
    <subcellularLocation>
        <location evidence="1">Cytoplasm</location>
    </subcellularLocation>
    <text evidence="1">Distribution is 50-50.</text>
</comment>
<comment type="induction">
    <text evidence="1">Repressed under conditions of excess protein secretion capacity and derepressed when protein secretion becomes limiting. This is regulated by SecM.</text>
</comment>
<comment type="similarity">
    <text evidence="1">Belongs to the SecA family.</text>
</comment>
<sequence>MLIKLLTKVFGSRNDRTLRRMQKVVDVINRMEPDIEKLTDTELRAKTDEFRERLAKGEVLENLIPEAFAVVREASKRVFGMRHFDVQLLGGMVLNERCIAEMRTGEGKTLTATLPAYLNALSGRGVHVVTVNDYLAQRDAENNRPLFEFLGLSIGINLPNMTAPAKRAAYAADITYGTNNEFGFDYLRDNMAFSPEERVQRQLHYALVDEVDSILIDEARTPLIISGPAEDSSEMYIRVNKLIPKLIRQEKEDSDSFQGEGHFSVDEKSRQVHLTERGLILIEQMLVEAGIMDEGESLYSPANIMLMHHVTAALRAHVLFTRDVDYIVKDGEVIIVDEHTGRTMQGRRWSDGLHQAVEAKEGVEIQNENQTLASITFQNYFRLYEKLAGMTGTADTEAFEFSSIYKLDTIVVPTNRPMIRKDLADLVYMTEQEKIGAIIEDIRERTANGQPVLVGTISIEKSEVVSAELTKAGIEHKVLNAKFHAMEAEIVSQAGQPGAVTIATNMAGRGTDIVLGGSWQSEIAALEDPTEEQIAAIKAAWQIRHDAVLASGGLHIIGTERHESRRIDNQLRGRAGRQGDAGSSRFYLSMEDALMRIFASDRVSGMMRKLGMKPGEAIEHPWVTKAIANAQRKVESRNFDIRKQLLEYDDVANDQRRAIYSQRNELLDVSDVSETINSIREDVFKTTIDSYIPTQSLEEMWDIEGLEQRLKNDFDLDMPIAKWLEDEPQLHEETLRERILQQAIETYQRKEEVVGIEMMRNFEKGVMLQTLDSLWKEHLAAMDYLRQGIHLRGYAQKDPKQEYKRESFAMFAAMLESLKYEVISVLSKVQVRMPEEVEALEVQRREEAERLARQQQLSHQTDNSALMSEEEVKVANSLERKVGRNDPCPCGSGKKYKQCHGRLQ</sequence>
<protein>
    <recommendedName>
        <fullName evidence="1">Protein translocase subunit SecA</fullName>
        <ecNumber evidence="1">7.4.2.8</ecNumber>
    </recommendedName>
</protein>
<organism>
    <name type="scientific">Yersinia pestis bv. Antiqua (strain Antiqua)</name>
    <dbReference type="NCBI Taxonomy" id="360102"/>
    <lineage>
        <taxon>Bacteria</taxon>
        <taxon>Pseudomonadati</taxon>
        <taxon>Pseudomonadota</taxon>
        <taxon>Gammaproteobacteria</taxon>
        <taxon>Enterobacterales</taxon>
        <taxon>Yersiniaceae</taxon>
        <taxon>Yersinia</taxon>
    </lineage>
</organism>
<dbReference type="EC" id="7.4.2.8" evidence="1"/>
<dbReference type="EMBL" id="CP000308">
    <property type="protein sequence ID" value="ABG15499.1"/>
    <property type="molecule type" value="Genomic_DNA"/>
</dbReference>
<dbReference type="RefSeq" id="WP_002210426.1">
    <property type="nucleotide sequence ID" value="NZ_CP009906.1"/>
</dbReference>
<dbReference type="SMR" id="Q1C223"/>
<dbReference type="GeneID" id="57974051"/>
<dbReference type="KEGG" id="ypa:YPA_3537"/>
<dbReference type="Proteomes" id="UP000001971">
    <property type="component" value="Chromosome"/>
</dbReference>
<dbReference type="GO" id="GO:0031522">
    <property type="term" value="C:cell envelope Sec protein transport complex"/>
    <property type="evidence" value="ECO:0007669"/>
    <property type="project" value="TreeGrafter"/>
</dbReference>
<dbReference type="GO" id="GO:0005829">
    <property type="term" value="C:cytosol"/>
    <property type="evidence" value="ECO:0007669"/>
    <property type="project" value="TreeGrafter"/>
</dbReference>
<dbReference type="GO" id="GO:0005886">
    <property type="term" value="C:plasma membrane"/>
    <property type="evidence" value="ECO:0007669"/>
    <property type="project" value="UniProtKB-SubCell"/>
</dbReference>
<dbReference type="GO" id="GO:0005524">
    <property type="term" value="F:ATP binding"/>
    <property type="evidence" value="ECO:0007669"/>
    <property type="project" value="UniProtKB-UniRule"/>
</dbReference>
<dbReference type="GO" id="GO:0046872">
    <property type="term" value="F:metal ion binding"/>
    <property type="evidence" value="ECO:0007669"/>
    <property type="project" value="UniProtKB-KW"/>
</dbReference>
<dbReference type="GO" id="GO:0008564">
    <property type="term" value="F:protein-exporting ATPase activity"/>
    <property type="evidence" value="ECO:0007669"/>
    <property type="project" value="UniProtKB-EC"/>
</dbReference>
<dbReference type="GO" id="GO:0065002">
    <property type="term" value="P:intracellular protein transmembrane transport"/>
    <property type="evidence" value="ECO:0007669"/>
    <property type="project" value="UniProtKB-UniRule"/>
</dbReference>
<dbReference type="GO" id="GO:0017038">
    <property type="term" value="P:protein import"/>
    <property type="evidence" value="ECO:0007669"/>
    <property type="project" value="InterPro"/>
</dbReference>
<dbReference type="GO" id="GO:0006605">
    <property type="term" value="P:protein targeting"/>
    <property type="evidence" value="ECO:0007669"/>
    <property type="project" value="UniProtKB-UniRule"/>
</dbReference>
<dbReference type="GO" id="GO:0043952">
    <property type="term" value="P:protein transport by the Sec complex"/>
    <property type="evidence" value="ECO:0007669"/>
    <property type="project" value="TreeGrafter"/>
</dbReference>
<dbReference type="CDD" id="cd17928">
    <property type="entry name" value="DEXDc_SecA"/>
    <property type="match status" value="1"/>
</dbReference>
<dbReference type="CDD" id="cd18803">
    <property type="entry name" value="SF2_C_secA"/>
    <property type="match status" value="1"/>
</dbReference>
<dbReference type="FunFam" id="1.10.3060.10:FF:000001">
    <property type="entry name" value="Preprotein translocase subunit SecA"/>
    <property type="match status" value="1"/>
</dbReference>
<dbReference type="FunFam" id="3.40.50.300:FF:000081">
    <property type="entry name" value="Preprotein translocase subunit SecA"/>
    <property type="match status" value="1"/>
</dbReference>
<dbReference type="FunFam" id="3.40.50.300:FF:000113">
    <property type="entry name" value="Preprotein translocase subunit SecA"/>
    <property type="match status" value="1"/>
</dbReference>
<dbReference type="FunFam" id="3.90.1440.10:FF:000001">
    <property type="entry name" value="Preprotein translocase subunit SecA"/>
    <property type="match status" value="1"/>
</dbReference>
<dbReference type="Gene3D" id="1.10.3060.10">
    <property type="entry name" value="Helical scaffold and wing domains of SecA"/>
    <property type="match status" value="1"/>
</dbReference>
<dbReference type="Gene3D" id="3.40.50.300">
    <property type="entry name" value="P-loop containing nucleotide triphosphate hydrolases"/>
    <property type="match status" value="2"/>
</dbReference>
<dbReference type="Gene3D" id="3.90.1440.10">
    <property type="entry name" value="SecA, preprotein cross-linking domain"/>
    <property type="match status" value="1"/>
</dbReference>
<dbReference type="HAMAP" id="MF_01382">
    <property type="entry name" value="SecA"/>
    <property type="match status" value="1"/>
</dbReference>
<dbReference type="InterPro" id="IPR014001">
    <property type="entry name" value="Helicase_ATP-bd"/>
</dbReference>
<dbReference type="InterPro" id="IPR027417">
    <property type="entry name" value="P-loop_NTPase"/>
</dbReference>
<dbReference type="InterPro" id="IPR004027">
    <property type="entry name" value="SEC_C_motif"/>
</dbReference>
<dbReference type="InterPro" id="IPR000185">
    <property type="entry name" value="SecA"/>
</dbReference>
<dbReference type="InterPro" id="IPR020937">
    <property type="entry name" value="SecA_CS"/>
</dbReference>
<dbReference type="InterPro" id="IPR011115">
    <property type="entry name" value="SecA_DEAD"/>
</dbReference>
<dbReference type="InterPro" id="IPR014018">
    <property type="entry name" value="SecA_motor_DEAD"/>
</dbReference>
<dbReference type="InterPro" id="IPR011130">
    <property type="entry name" value="SecA_preprotein_X-link_dom"/>
</dbReference>
<dbReference type="InterPro" id="IPR044722">
    <property type="entry name" value="SecA_SF2_C"/>
</dbReference>
<dbReference type="InterPro" id="IPR011116">
    <property type="entry name" value="SecA_Wing/Scaffold"/>
</dbReference>
<dbReference type="InterPro" id="IPR036266">
    <property type="entry name" value="SecA_Wing/Scaffold_sf"/>
</dbReference>
<dbReference type="InterPro" id="IPR036670">
    <property type="entry name" value="SecA_X-link_sf"/>
</dbReference>
<dbReference type="NCBIfam" id="NF009538">
    <property type="entry name" value="PRK12904.1"/>
    <property type="match status" value="1"/>
</dbReference>
<dbReference type="NCBIfam" id="TIGR00963">
    <property type="entry name" value="secA"/>
    <property type="match status" value="1"/>
</dbReference>
<dbReference type="PANTHER" id="PTHR30612:SF0">
    <property type="entry name" value="CHLOROPLAST PROTEIN-TRANSPORTING ATPASE"/>
    <property type="match status" value="1"/>
</dbReference>
<dbReference type="PANTHER" id="PTHR30612">
    <property type="entry name" value="SECA INNER MEMBRANE COMPONENT OF SEC PROTEIN SECRETION SYSTEM"/>
    <property type="match status" value="1"/>
</dbReference>
<dbReference type="Pfam" id="PF21090">
    <property type="entry name" value="P-loop_SecA"/>
    <property type="match status" value="1"/>
</dbReference>
<dbReference type="Pfam" id="PF02810">
    <property type="entry name" value="SEC-C"/>
    <property type="match status" value="1"/>
</dbReference>
<dbReference type="Pfam" id="PF07517">
    <property type="entry name" value="SecA_DEAD"/>
    <property type="match status" value="1"/>
</dbReference>
<dbReference type="Pfam" id="PF01043">
    <property type="entry name" value="SecA_PP_bind"/>
    <property type="match status" value="1"/>
</dbReference>
<dbReference type="Pfam" id="PF07516">
    <property type="entry name" value="SecA_SW"/>
    <property type="match status" value="1"/>
</dbReference>
<dbReference type="PRINTS" id="PR00906">
    <property type="entry name" value="SECA"/>
</dbReference>
<dbReference type="SMART" id="SM00957">
    <property type="entry name" value="SecA_DEAD"/>
    <property type="match status" value="1"/>
</dbReference>
<dbReference type="SMART" id="SM00958">
    <property type="entry name" value="SecA_PP_bind"/>
    <property type="match status" value="1"/>
</dbReference>
<dbReference type="SUPFAM" id="SSF81886">
    <property type="entry name" value="Helical scaffold and wing domains of SecA"/>
    <property type="match status" value="1"/>
</dbReference>
<dbReference type="SUPFAM" id="SSF52540">
    <property type="entry name" value="P-loop containing nucleoside triphosphate hydrolases"/>
    <property type="match status" value="2"/>
</dbReference>
<dbReference type="SUPFAM" id="SSF81767">
    <property type="entry name" value="Pre-protein crosslinking domain of SecA"/>
    <property type="match status" value="1"/>
</dbReference>
<dbReference type="PROSITE" id="PS01312">
    <property type="entry name" value="SECA"/>
    <property type="match status" value="1"/>
</dbReference>
<dbReference type="PROSITE" id="PS51196">
    <property type="entry name" value="SECA_MOTOR_DEAD"/>
    <property type="match status" value="1"/>
</dbReference>
<evidence type="ECO:0000255" key="1">
    <source>
        <dbReference type="HAMAP-Rule" id="MF_01382"/>
    </source>
</evidence>
<evidence type="ECO:0000256" key="2">
    <source>
        <dbReference type="SAM" id="MobiDB-lite"/>
    </source>
</evidence>
<reference key="1">
    <citation type="journal article" date="2006" name="J. Bacteriol.">
        <title>Complete genome sequence of Yersinia pestis strains Antiqua and Nepal516: evidence of gene reduction in an emerging pathogen.</title>
        <authorList>
            <person name="Chain P.S.G."/>
            <person name="Hu P."/>
            <person name="Malfatti S.A."/>
            <person name="Radnedge L."/>
            <person name="Larimer F."/>
            <person name="Vergez L.M."/>
            <person name="Worsham P."/>
            <person name="Chu M.C."/>
            <person name="Andersen G.L."/>
        </authorList>
    </citation>
    <scope>NUCLEOTIDE SEQUENCE [LARGE SCALE GENOMIC DNA]</scope>
    <source>
        <strain>Antiqua</strain>
    </source>
</reference>
<keyword id="KW-0067">ATP-binding</keyword>
<keyword id="KW-0997">Cell inner membrane</keyword>
<keyword id="KW-1003">Cell membrane</keyword>
<keyword id="KW-0963">Cytoplasm</keyword>
<keyword id="KW-0472">Membrane</keyword>
<keyword id="KW-0479">Metal-binding</keyword>
<keyword id="KW-0547">Nucleotide-binding</keyword>
<keyword id="KW-0653">Protein transport</keyword>
<keyword id="KW-1278">Translocase</keyword>
<keyword id="KW-0811">Translocation</keyword>
<keyword id="KW-0813">Transport</keyword>
<keyword id="KW-0862">Zinc</keyword>
<feature type="chain" id="PRO_0000321052" description="Protein translocase subunit SecA">
    <location>
        <begin position="1"/>
        <end position="904"/>
    </location>
</feature>
<feature type="region of interest" description="Disordered" evidence="2">
    <location>
        <begin position="851"/>
        <end position="870"/>
    </location>
</feature>
<feature type="binding site" evidence="1">
    <location>
        <position position="87"/>
    </location>
    <ligand>
        <name>ATP</name>
        <dbReference type="ChEBI" id="CHEBI:30616"/>
    </ligand>
</feature>
<feature type="binding site" evidence="1">
    <location>
        <begin position="105"/>
        <end position="109"/>
    </location>
    <ligand>
        <name>ATP</name>
        <dbReference type="ChEBI" id="CHEBI:30616"/>
    </ligand>
</feature>
<feature type="binding site" evidence="1">
    <location>
        <position position="512"/>
    </location>
    <ligand>
        <name>ATP</name>
        <dbReference type="ChEBI" id="CHEBI:30616"/>
    </ligand>
</feature>
<feature type="binding site" evidence="1">
    <location>
        <position position="888"/>
    </location>
    <ligand>
        <name>Zn(2+)</name>
        <dbReference type="ChEBI" id="CHEBI:29105"/>
    </ligand>
</feature>
<feature type="binding site" evidence="1">
    <location>
        <position position="890"/>
    </location>
    <ligand>
        <name>Zn(2+)</name>
        <dbReference type="ChEBI" id="CHEBI:29105"/>
    </ligand>
</feature>
<feature type="binding site" evidence="1">
    <location>
        <position position="899"/>
    </location>
    <ligand>
        <name>Zn(2+)</name>
        <dbReference type="ChEBI" id="CHEBI:29105"/>
    </ligand>
</feature>
<feature type="binding site" evidence="1">
    <location>
        <position position="900"/>
    </location>
    <ligand>
        <name>Zn(2+)</name>
        <dbReference type="ChEBI" id="CHEBI:29105"/>
    </ligand>
</feature>
<accession>Q1C223</accession>